<reference key="1">
    <citation type="journal article" date="2009" name="PLoS Pathog.">
        <title>Molecular evolutionary consequences of niche restriction in Francisella tularensis, a facultative intracellular pathogen.</title>
        <authorList>
            <person name="Larsson P."/>
            <person name="Elfsmark D."/>
            <person name="Svensson K."/>
            <person name="Wikstroem P."/>
            <person name="Forsman M."/>
            <person name="Brettin T."/>
            <person name="Keim P."/>
            <person name="Johansson A."/>
        </authorList>
    </citation>
    <scope>NUCLEOTIDE SEQUENCE [LARGE SCALE GENOMIC DNA]</scope>
    <source>
        <strain>FSC147</strain>
    </source>
</reference>
<proteinExistence type="inferred from homology"/>
<organism>
    <name type="scientific">Francisella tularensis subsp. mediasiatica (strain FSC147)</name>
    <dbReference type="NCBI Taxonomy" id="441952"/>
    <lineage>
        <taxon>Bacteria</taxon>
        <taxon>Pseudomonadati</taxon>
        <taxon>Pseudomonadota</taxon>
        <taxon>Gammaproteobacteria</taxon>
        <taxon>Thiotrichales</taxon>
        <taxon>Francisellaceae</taxon>
        <taxon>Francisella</taxon>
    </lineage>
</organism>
<name>SYH_FRATM</name>
<keyword id="KW-0030">Aminoacyl-tRNA synthetase</keyword>
<keyword id="KW-0067">ATP-binding</keyword>
<keyword id="KW-0963">Cytoplasm</keyword>
<keyword id="KW-0436">Ligase</keyword>
<keyword id="KW-0547">Nucleotide-binding</keyword>
<keyword id="KW-0648">Protein biosynthesis</keyword>
<feature type="chain" id="PRO_1000095557" description="Histidine--tRNA ligase">
    <location>
        <begin position="1"/>
        <end position="421"/>
    </location>
</feature>
<sequence>MSKLTIVRGFNDVLPLDSYKWQLLESKVKLILDRYNYSETRLPIVERSELFHRSVGESSDIVSKETYDFQDRNGDSLTLRPEGTAGCVRMVIENNLATRGQTQKLWYCGPMFRYERPQKGRYRQFYQLGVEAYGFDGIAIDLEVIAIAWSLFKELGISEYVTLELNSLGSSLNRQEYTQALLQYLKPYHAELDEDSIKRLDKNPLRILDSKIEKTQKILANAPKLIDFIDHDLRLRFKQTCQYLDALGVRYKLNENLVRGLDYYTGLVFEWTTDKLGSQSAICAGGRYDGLVENLGGQKTAAIGFAIGMERLLLLLEDLGKLPNQDNACDVFFILDSAQLHQSLAIVENIRQELPQLKIDMDLKFGSFKSQFKKADKSGAKVAIIIGQDELDNGFAGIKFLQQNEEQQQVAFNELINFLER</sequence>
<accession>B2SEW9</accession>
<comment type="catalytic activity">
    <reaction evidence="1">
        <text>tRNA(His) + L-histidine + ATP = L-histidyl-tRNA(His) + AMP + diphosphate + H(+)</text>
        <dbReference type="Rhea" id="RHEA:17313"/>
        <dbReference type="Rhea" id="RHEA-COMP:9665"/>
        <dbReference type="Rhea" id="RHEA-COMP:9689"/>
        <dbReference type="ChEBI" id="CHEBI:15378"/>
        <dbReference type="ChEBI" id="CHEBI:30616"/>
        <dbReference type="ChEBI" id="CHEBI:33019"/>
        <dbReference type="ChEBI" id="CHEBI:57595"/>
        <dbReference type="ChEBI" id="CHEBI:78442"/>
        <dbReference type="ChEBI" id="CHEBI:78527"/>
        <dbReference type="ChEBI" id="CHEBI:456215"/>
        <dbReference type="EC" id="6.1.1.21"/>
    </reaction>
</comment>
<comment type="subunit">
    <text evidence="1">Homodimer.</text>
</comment>
<comment type="subcellular location">
    <subcellularLocation>
        <location evidence="1">Cytoplasm</location>
    </subcellularLocation>
</comment>
<comment type="similarity">
    <text evidence="1">Belongs to the class-II aminoacyl-tRNA synthetase family.</text>
</comment>
<protein>
    <recommendedName>
        <fullName evidence="1">Histidine--tRNA ligase</fullName>
        <ecNumber evidence="1">6.1.1.21</ecNumber>
    </recommendedName>
    <alternativeName>
        <fullName evidence="1">Histidyl-tRNA synthetase</fullName>
        <shortName evidence="1">HisRS</shortName>
    </alternativeName>
</protein>
<gene>
    <name evidence="1" type="primary">hisS</name>
    <name type="ordered locus">FTM_0116</name>
</gene>
<evidence type="ECO:0000255" key="1">
    <source>
        <dbReference type="HAMAP-Rule" id="MF_00127"/>
    </source>
</evidence>
<dbReference type="EC" id="6.1.1.21" evidence="1"/>
<dbReference type="EMBL" id="CP000915">
    <property type="protein sequence ID" value="ACD30214.1"/>
    <property type="molecule type" value="Genomic_DNA"/>
</dbReference>
<dbReference type="SMR" id="B2SEW9"/>
<dbReference type="KEGG" id="ftm:FTM_0116"/>
<dbReference type="HOGENOM" id="CLU_025113_1_1_6"/>
<dbReference type="GO" id="GO:0005737">
    <property type="term" value="C:cytoplasm"/>
    <property type="evidence" value="ECO:0007669"/>
    <property type="project" value="UniProtKB-SubCell"/>
</dbReference>
<dbReference type="GO" id="GO:0005524">
    <property type="term" value="F:ATP binding"/>
    <property type="evidence" value="ECO:0007669"/>
    <property type="project" value="UniProtKB-UniRule"/>
</dbReference>
<dbReference type="GO" id="GO:0004821">
    <property type="term" value="F:histidine-tRNA ligase activity"/>
    <property type="evidence" value="ECO:0007669"/>
    <property type="project" value="UniProtKB-UniRule"/>
</dbReference>
<dbReference type="GO" id="GO:0006427">
    <property type="term" value="P:histidyl-tRNA aminoacylation"/>
    <property type="evidence" value="ECO:0007669"/>
    <property type="project" value="UniProtKB-UniRule"/>
</dbReference>
<dbReference type="CDD" id="cd00773">
    <property type="entry name" value="HisRS-like_core"/>
    <property type="match status" value="1"/>
</dbReference>
<dbReference type="FunFam" id="3.30.930.10:FF:000005">
    <property type="entry name" value="Histidine--tRNA ligase"/>
    <property type="match status" value="1"/>
</dbReference>
<dbReference type="Gene3D" id="3.40.50.800">
    <property type="entry name" value="Anticodon-binding domain"/>
    <property type="match status" value="1"/>
</dbReference>
<dbReference type="Gene3D" id="3.30.930.10">
    <property type="entry name" value="Bira Bifunctional Protein, Domain 2"/>
    <property type="match status" value="1"/>
</dbReference>
<dbReference type="HAMAP" id="MF_00127">
    <property type="entry name" value="His_tRNA_synth"/>
    <property type="match status" value="1"/>
</dbReference>
<dbReference type="InterPro" id="IPR006195">
    <property type="entry name" value="aa-tRNA-synth_II"/>
</dbReference>
<dbReference type="InterPro" id="IPR045864">
    <property type="entry name" value="aa-tRNA-synth_II/BPL/LPL"/>
</dbReference>
<dbReference type="InterPro" id="IPR004154">
    <property type="entry name" value="Anticodon-bd"/>
</dbReference>
<dbReference type="InterPro" id="IPR036621">
    <property type="entry name" value="Anticodon-bd_dom_sf"/>
</dbReference>
<dbReference type="InterPro" id="IPR015807">
    <property type="entry name" value="His-tRNA-ligase"/>
</dbReference>
<dbReference type="InterPro" id="IPR041715">
    <property type="entry name" value="HisRS-like_core"/>
</dbReference>
<dbReference type="InterPro" id="IPR004516">
    <property type="entry name" value="HisRS/HisZ"/>
</dbReference>
<dbReference type="NCBIfam" id="TIGR00442">
    <property type="entry name" value="hisS"/>
    <property type="match status" value="1"/>
</dbReference>
<dbReference type="PANTHER" id="PTHR43707:SF1">
    <property type="entry name" value="HISTIDINE--TRNA LIGASE, MITOCHONDRIAL-RELATED"/>
    <property type="match status" value="1"/>
</dbReference>
<dbReference type="PANTHER" id="PTHR43707">
    <property type="entry name" value="HISTIDYL-TRNA SYNTHETASE"/>
    <property type="match status" value="1"/>
</dbReference>
<dbReference type="Pfam" id="PF03129">
    <property type="entry name" value="HGTP_anticodon"/>
    <property type="match status" value="1"/>
</dbReference>
<dbReference type="Pfam" id="PF13393">
    <property type="entry name" value="tRNA-synt_His"/>
    <property type="match status" value="1"/>
</dbReference>
<dbReference type="PIRSF" id="PIRSF001549">
    <property type="entry name" value="His-tRNA_synth"/>
    <property type="match status" value="1"/>
</dbReference>
<dbReference type="SUPFAM" id="SSF52954">
    <property type="entry name" value="Class II aaRS ABD-related"/>
    <property type="match status" value="1"/>
</dbReference>
<dbReference type="SUPFAM" id="SSF55681">
    <property type="entry name" value="Class II aaRS and biotin synthetases"/>
    <property type="match status" value="1"/>
</dbReference>
<dbReference type="PROSITE" id="PS50862">
    <property type="entry name" value="AA_TRNA_LIGASE_II"/>
    <property type="match status" value="1"/>
</dbReference>